<dbReference type="EMBL" id="CR380958">
    <property type="protein sequence ID" value="CAG62001.1"/>
    <property type="molecule type" value="Genomic_DNA"/>
</dbReference>
<dbReference type="RefSeq" id="XP_449031.1">
    <property type="nucleotide sequence ID" value="XM_449031.1"/>
</dbReference>
<dbReference type="SMR" id="Q6FL63"/>
<dbReference type="FunCoup" id="Q6FL63">
    <property type="interactions" value="94"/>
</dbReference>
<dbReference type="STRING" id="284593.Q6FL63"/>
<dbReference type="EnsemblFungi" id="CAGL0L05896g-T">
    <property type="protein sequence ID" value="CAGL0L05896g-T-p1"/>
    <property type="gene ID" value="CAGL0L05896g"/>
</dbReference>
<dbReference type="KEGG" id="cgr:2890811"/>
<dbReference type="CGD" id="CAL0136018">
    <property type="gene designation" value="CAGL0L05896g"/>
</dbReference>
<dbReference type="VEuPathDB" id="FungiDB:CAGL0L05896g"/>
<dbReference type="eggNOG" id="KOG2654">
    <property type="taxonomic scope" value="Eukaryota"/>
</dbReference>
<dbReference type="HOGENOM" id="CLU_086127_0_0_1"/>
<dbReference type="InParanoid" id="Q6FL63"/>
<dbReference type="OMA" id="THEHHGS"/>
<dbReference type="Proteomes" id="UP000002428">
    <property type="component" value="Chromosome L"/>
</dbReference>
<dbReference type="GO" id="GO:0005737">
    <property type="term" value="C:cytoplasm"/>
    <property type="evidence" value="ECO:0007669"/>
    <property type="project" value="UniProtKB-SubCell"/>
</dbReference>
<dbReference type="GO" id="GO:0000974">
    <property type="term" value="C:Prp19 complex"/>
    <property type="evidence" value="ECO:0007669"/>
    <property type="project" value="EnsemblFungi"/>
</dbReference>
<dbReference type="GO" id="GO:0070274">
    <property type="term" value="C:RES complex"/>
    <property type="evidence" value="ECO:0007669"/>
    <property type="project" value="EnsemblFungi"/>
</dbReference>
<dbReference type="GO" id="GO:0005684">
    <property type="term" value="C:U2-type spliceosomal complex"/>
    <property type="evidence" value="ECO:0007669"/>
    <property type="project" value="TreeGrafter"/>
</dbReference>
<dbReference type="GO" id="GO:0003723">
    <property type="term" value="F:RNA binding"/>
    <property type="evidence" value="ECO:0007669"/>
    <property type="project" value="TreeGrafter"/>
</dbReference>
<dbReference type="GO" id="GO:0051237">
    <property type="term" value="P:maintenance of RNA location"/>
    <property type="evidence" value="ECO:0007669"/>
    <property type="project" value="EnsemblFungi"/>
</dbReference>
<dbReference type="GO" id="GO:0000398">
    <property type="term" value="P:mRNA splicing, via spliceosome"/>
    <property type="evidence" value="ECO:0007669"/>
    <property type="project" value="EnsemblFungi"/>
</dbReference>
<dbReference type="InterPro" id="IPR018609">
    <property type="entry name" value="Bud13"/>
</dbReference>
<dbReference type="InterPro" id="IPR051112">
    <property type="entry name" value="CWC26_splicing_factor"/>
</dbReference>
<dbReference type="PANTHER" id="PTHR31809">
    <property type="entry name" value="BUD13 HOMOLOG"/>
    <property type="match status" value="1"/>
</dbReference>
<dbReference type="PANTHER" id="PTHR31809:SF0">
    <property type="entry name" value="BUD13 HOMOLOG"/>
    <property type="match status" value="1"/>
</dbReference>
<dbReference type="Pfam" id="PF09736">
    <property type="entry name" value="Bud13"/>
    <property type="match status" value="1"/>
</dbReference>
<sequence length="235" mass="26405">MSLHDYLLKEYGPSDRKKKSKKVDSKSTAQKPNNEDVNSNANNPLRDNSEKSLWLSHGVNNIPGAPLSDNLTNKQKNGINIEPPSRTVLEPKTHNIETVFRNAQGHKIDVEAKTLDSDSGKRNSQEERIRILNMGEIQLAGLDGVSTISSKYTAEIRDNDPATEFDHNKGVNHQKISPLGRKLYAGTATENRFGILPGNKWDGVDRSNGYEKKWFKRQGELAESKIQEFTNSEDY</sequence>
<name>CWC26_CANGA</name>
<gene>
    <name type="primary">CWC26</name>
    <name type="ordered locus">CAGL0L05896g</name>
</gene>
<reference key="1">
    <citation type="journal article" date="2004" name="Nature">
        <title>Genome evolution in yeasts.</title>
        <authorList>
            <person name="Dujon B."/>
            <person name="Sherman D."/>
            <person name="Fischer G."/>
            <person name="Durrens P."/>
            <person name="Casaregola S."/>
            <person name="Lafontaine I."/>
            <person name="de Montigny J."/>
            <person name="Marck C."/>
            <person name="Neuveglise C."/>
            <person name="Talla E."/>
            <person name="Goffard N."/>
            <person name="Frangeul L."/>
            <person name="Aigle M."/>
            <person name="Anthouard V."/>
            <person name="Babour A."/>
            <person name="Barbe V."/>
            <person name="Barnay S."/>
            <person name="Blanchin S."/>
            <person name="Beckerich J.-M."/>
            <person name="Beyne E."/>
            <person name="Bleykasten C."/>
            <person name="Boisrame A."/>
            <person name="Boyer J."/>
            <person name="Cattolico L."/>
            <person name="Confanioleri F."/>
            <person name="de Daruvar A."/>
            <person name="Despons L."/>
            <person name="Fabre E."/>
            <person name="Fairhead C."/>
            <person name="Ferry-Dumazet H."/>
            <person name="Groppi A."/>
            <person name="Hantraye F."/>
            <person name="Hennequin C."/>
            <person name="Jauniaux N."/>
            <person name="Joyet P."/>
            <person name="Kachouri R."/>
            <person name="Kerrest A."/>
            <person name="Koszul R."/>
            <person name="Lemaire M."/>
            <person name="Lesur I."/>
            <person name="Ma L."/>
            <person name="Muller H."/>
            <person name="Nicaud J.-M."/>
            <person name="Nikolski M."/>
            <person name="Oztas S."/>
            <person name="Ozier-Kalogeropoulos O."/>
            <person name="Pellenz S."/>
            <person name="Potier S."/>
            <person name="Richard G.-F."/>
            <person name="Straub M.-L."/>
            <person name="Suleau A."/>
            <person name="Swennen D."/>
            <person name="Tekaia F."/>
            <person name="Wesolowski-Louvel M."/>
            <person name="Westhof E."/>
            <person name="Wirth B."/>
            <person name="Zeniou-Meyer M."/>
            <person name="Zivanovic Y."/>
            <person name="Bolotin-Fukuhara M."/>
            <person name="Thierry A."/>
            <person name="Bouchier C."/>
            <person name="Caudron B."/>
            <person name="Scarpelli C."/>
            <person name="Gaillardin C."/>
            <person name="Weissenbach J."/>
            <person name="Wincker P."/>
            <person name="Souciet J.-L."/>
        </authorList>
    </citation>
    <scope>NUCLEOTIDE SEQUENCE [LARGE SCALE GENOMIC DNA]</scope>
    <source>
        <strain>ATCC 2001 / BCRC 20586 / JCM 3761 / NBRC 0622 / NRRL Y-65 / CBS 138</strain>
    </source>
</reference>
<organism>
    <name type="scientific">Candida glabrata (strain ATCC 2001 / BCRC 20586 / JCM 3761 / NBRC 0622 / NRRL Y-65 / CBS 138)</name>
    <name type="common">Yeast</name>
    <name type="synonym">Nakaseomyces glabratus</name>
    <dbReference type="NCBI Taxonomy" id="284593"/>
    <lineage>
        <taxon>Eukaryota</taxon>
        <taxon>Fungi</taxon>
        <taxon>Dikarya</taxon>
        <taxon>Ascomycota</taxon>
        <taxon>Saccharomycotina</taxon>
        <taxon>Saccharomycetes</taxon>
        <taxon>Saccharomycetales</taxon>
        <taxon>Saccharomycetaceae</taxon>
        <taxon>Nakaseomyces</taxon>
    </lineage>
</organism>
<keyword id="KW-0963">Cytoplasm</keyword>
<keyword id="KW-0507">mRNA processing</keyword>
<keyword id="KW-0508">mRNA splicing</keyword>
<keyword id="KW-0539">Nucleus</keyword>
<keyword id="KW-1185">Reference proteome</keyword>
<keyword id="KW-0747">Spliceosome</keyword>
<evidence type="ECO:0000250" key="1"/>
<evidence type="ECO:0000256" key="2">
    <source>
        <dbReference type="SAM" id="MobiDB-lite"/>
    </source>
</evidence>
<evidence type="ECO:0000305" key="3"/>
<feature type="chain" id="PRO_0000079600" description="Pre-mRNA-splicing factor CWC26">
    <location>
        <begin position="1"/>
        <end position="235"/>
    </location>
</feature>
<feature type="region of interest" description="Disordered" evidence="2">
    <location>
        <begin position="1"/>
        <end position="52"/>
    </location>
</feature>
<feature type="region of interest" description="Disordered" evidence="2">
    <location>
        <begin position="64"/>
        <end position="85"/>
    </location>
</feature>
<feature type="compositionally biased region" description="Basic and acidic residues" evidence="2">
    <location>
        <begin position="1"/>
        <end position="15"/>
    </location>
</feature>
<feature type="compositionally biased region" description="Polar residues" evidence="2">
    <location>
        <begin position="28"/>
        <end position="46"/>
    </location>
</feature>
<feature type="compositionally biased region" description="Polar residues" evidence="2">
    <location>
        <begin position="69"/>
        <end position="78"/>
    </location>
</feature>
<protein>
    <recommendedName>
        <fullName>Pre-mRNA-splicing factor CWC26</fullName>
    </recommendedName>
</protein>
<accession>Q6FL63</accession>
<proteinExistence type="inferred from homology"/>
<comment type="function">
    <text evidence="1">Involved in pre-mRNA splicing.</text>
</comment>
<comment type="subunit">
    <text evidence="1">Associated with the spliceosome.</text>
</comment>
<comment type="subcellular location">
    <subcellularLocation>
        <location evidence="1">Cytoplasm</location>
    </subcellularLocation>
    <subcellularLocation>
        <location evidence="1">Nucleus</location>
    </subcellularLocation>
</comment>
<comment type="similarity">
    <text evidence="3">Belongs to the CWC26 family.</text>
</comment>